<sequence>MARIAGINIPDQKHTVIALTAIYGIGKTRSQAICVAAGIAENVKISELSEEQIEKLRDEVAKYVVEGDLRREVTLSIKRLMDLGTYRGLRHRRGLPVRGQRTKTNARTRKGPRKPIKK</sequence>
<protein>
    <recommendedName>
        <fullName evidence="1">Small ribosomal subunit protein uS13</fullName>
    </recommendedName>
    <alternativeName>
        <fullName evidence="3">30S ribosomal protein S13</fullName>
    </alternativeName>
</protein>
<gene>
    <name evidence="1" type="primary">rpsM</name>
    <name type="ordered locus">YE3901</name>
</gene>
<evidence type="ECO:0000255" key="1">
    <source>
        <dbReference type="HAMAP-Rule" id="MF_01315"/>
    </source>
</evidence>
<evidence type="ECO:0000256" key="2">
    <source>
        <dbReference type="SAM" id="MobiDB-lite"/>
    </source>
</evidence>
<evidence type="ECO:0000305" key="3"/>
<dbReference type="EMBL" id="AM286415">
    <property type="protein sequence ID" value="CAL13920.1"/>
    <property type="molecule type" value="Genomic_DNA"/>
</dbReference>
<dbReference type="RefSeq" id="WP_004702348.1">
    <property type="nucleotide sequence ID" value="NC_008800.1"/>
</dbReference>
<dbReference type="RefSeq" id="YP_001008046.1">
    <property type="nucleotide sequence ID" value="NC_008800.1"/>
</dbReference>
<dbReference type="SMR" id="A1JS04"/>
<dbReference type="GeneID" id="89598616"/>
<dbReference type="KEGG" id="yen:YE3901"/>
<dbReference type="PATRIC" id="fig|393305.7.peg.4151"/>
<dbReference type="eggNOG" id="COG0099">
    <property type="taxonomic scope" value="Bacteria"/>
</dbReference>
<dbReference type="HOGENOM" id="CLU_103849_1_2_6"/>
<dbReference type="OrthoDB" id="9803610at2"/>
<dbReference type="PRO" id="PR:A1JS04"/>
<dbReference type="Proteomes" id="UP000000642">
    <property type="component" value="Chromosome"/>
</dbReference>
<dbReference type="GO" id="GO:0005829">
    <property type="term" value="C:cytosol"/>
    <property type="evidence" value="ECO:0007669"/>
    <property type="project" value="TreeGrafter"/>
</dbReference>
<dbReference type="GO" id="GO:0015935">
    <property type="term" value="C:small ribosomal subunit"/>
    <property type="evidence" value="ECO:0007669"/>
    <property type="project" value="TreeGrafter"/>
</dbReference>
<dbReference type="GO" id="GO:0019843">
    <property type="term" value="F:rRNA binding"/>
    <property type="evidence" value="ECO:0007669"/>
    <property type="project" value="UniProtKB-UniRule"/>
</dbReference>
<dbReference type="GO" id="GO:0003735">
    <property type="term" value="F:structural constituent of ribosome"/>
    <property type="evidence" value="ECO:0007669"/>
    <property type="project" value="InterPro"/>
</dbReference>
<dbReference type="GO" id="GO:0000049">
    <property type="term" value="F:tRNA binding"/>
    <property type="evidence" value="ECO:0007669"/>
    <property type="project" value="UniProtKB-UniRule"/>
</dbReference>
<dbReference type="GO" id="GO:0006412">
    <property type="term" value="P:translation"/>
    <property type="evidence" value="ECO:0007669"/>
    <property type="project" value="UniProtKB-UniRule"/>
</dbReference>
<dbReference type="FunFam" id="1.10.8.50:FF:000001">
    <property type="entry name" value="30S ribosomal protein S13"/>
    <property type="match status" value="1"/>
</dbReference>
<dbReference type="FunFam" id="4.10.910.10:FF:000001">
    <property type="entry name" value="30S ribosomal protein S13"/>
    <property type="match status" value="1"/>
</dbReference>
<dbReference type="Gene3D" id="1.10.8.50">
    <property type="match status" value="1"/>
</dbReference>
<dbReference type="Gene3D" id="4.10.910.10">
    <property type="entry name" value="30s ribosomal protein s13, domain 2"/>
    <property type="match status" value="1"/>
</dbReference>
<dbReference type="HAMAP" id="MF_01315">
    <property type="entry name" value="Ribosomal_uS13"/>
    <property type="match status" value="1"/>
</dbReference>
<dbReference type="InterPro" id="IPR027437">
    <property type="entry name" value="Rbsml_uS13_C"/>
</dbReference>
<dbReference type="InterPro" id="IPR001892">
    <property type="entry name" value="Ribosomal_uS13"/>
</dbReference>
<dbReference type="InterPro" id="IPR010979">
    <property type="entry name" value="Ribosomal_uS13-like_H2TH"/>
</dbReference>
<dbReference type="InterPro" id="IPR019980">
    <property type="entry name" value="Ribosomal_uS13_bac-type"/>
</dbReference>
<dbReference type="InterPro" id="IPR018269">
    <property type="entry name" value="Ribosomal_uS13_CS"/>
</dbReference>
<dbReference type="NCBIfam" id="TIGR03631">
    <property type="entry name" value="uS13_bact"/>
    <property type="match status" value="1"/>
</dbReference>
<dbReference type="PANTHER" id="PTHR10871">
    <property type="entry name" value="30S RIBOSOMAL PROTEIN S13/40S RIBOSOMAL PROTEIN S18"/>
    <property type="match status" value="1"/>
</dbReference>
<dbReference type="PANTHER" id="PTHR10871:SF1">
    <property type="entry name" value="SMALL RIBOSOMAL SUBUNIT PROTEIN US13M"/>
    <property type="match status" value="1"/>
</dbReference>
<dbReference type="Pfam" id="PF00416">
    <property type="entry name" value="Ribosomal_S13"/>
    <property type="match status" value="1"/>
</dbReference>
<dbReference type="PIRSF" id="PIRSF002134">
    <property type="entry name" value="Ribosomal_S13"/>
    <property type="match status" value="1"/>
</dbReference>
<dbReference type="SUPFAM" id="SSF46946">
    <property type="entry name" value="S13-like H2TH domain"/>
    <property type="match status" value="1"/>
</dbReference>
<dbReference type="PROSITE" id="PS00646">
    <property type="entry name" value="RIBOSOMAL_S13_1"/>
    <property type="match status" value="1"/>
</dbReference>
<dbReference type="PROSITE" id="PS50159">
    <property type="entry name" value="RIBOSOMAL_S13_2"/>
    <property type="match status" value="1"/>
</dbReference>
<reference key="1">
    <citation type="journal article" date="2006" name="PLoS Genet.">
        <title>The complete genome sequence and comparative genome analysis of the high pathogenicity Yersinia enterocolitica strain 8081.</title>
        <authorList>
            <person name="Thomson N.R."/>
            <person name="Howard S."/>
            <person name="Wren B.W."/>
            <person name="Holden M.T.G."/>
            <person name="Crossman L."/>
            <person name="Challis G.L."/>
            <person name="Churcher C."/>
            <person name="Mungall K."/>
            <person name="Brooks K."/>
            <person name="Chillingworth T."/>
            <person name="Feltwell T."/>
            <person name="Abdellah Z."/>
            <person name="Hauser H."/>
            <person name="Jagels K."/>
            <person name="Maddison M."/>
            <person name="Moule S."/>
            <person name="Sanders M."/>
            <person name="Whitehead S."/>
            <person name="Quail M.A."/>
            <person name="Dougan G."/>
            <person name="Parkhill J."/>
            <person name="Prentice M.B."/>
        </authorList>
    </citation>
    <scope>NUCLEOTIDE SEQUENCE [LARGE SCALE GENOMIC DNA]</scope>
    <source>
        <strain>NCTC 13174 / 8081</strain>
    </source>
</reference>
<proteinExistence type="inferred from homology"/>
<feature type="chain" id="PRO_0000306745" description="Small ribosomal subunit protein uS13">
    <location>
        <begin position="1"/>
        <end position="118"/>
    </location>
</feature>
<feature type="region of interest" description="Disordered" evidence="2">
    <location>
        <begin position="92"/>
        <end position="118"/>
    </location>
</feature>
<comment type="function">
    <text evidence="1">Located at the top of the head of the 30S subunit, it contacts several helices of the 16S rRNA. In the 70S ribosome it contacts the 23S rRNA (bridge B1a) and protein L5 of the 50S subunit (bridge B1b), connecting the 2 subunits; these bridges are implicated in subunit movement. Contacts the tRNAs in the A and P-sites.</text>
</comment>
<comment type="subunit">
    <text evidence="1">Part of the 30S ribosomal subunit. Forms a loose heterodimer with protein S19. Forms two bridges to the 50S subunit in the 70S ribosome.</text>
</comment>
<comment type="similarity">
    <text evidence="1">Belongs to the universal ribosomal protein uS13 family.</text>
</comment>
<organism>
    <name type="scientific">Yersinia enterocolitica serotype O:8 / biotype 1B (strain NCTC 13174 / 8081)</name>
    <dbReference type="NCBI Taxonomy" id="393305"/>
    <lineage>
        <taxon>Bacteria</taxon>
        <taxon>Pseudomonadati</taxon>
        <taxon>Pseudomonadota</taxon>
        <taxon>Gammaproteobacteria</taxon>
        <taxon>Enterobacterales</taxon>
        <taxon>Yersiniaceae</taxon>
        <taxon>Yersinia</taxon>
    </lineage>
</organism>
<accession>A1JS04</accession>
<keyword id="KW-0687">Ribonucleoprotein</keyword>
<keyword id="KW-0689">Ribosomal protein</keyword>
<keyword id="KW-0694">RNA-binding</keyword>
<keyword id="KW-0699">rRNA-binding</keyword>
<keyword id="KW-0820">tRNA-binding</keyword>
<name>RS13_YERE8</name>